<gene>
    <name type="primary">folM</name>
    <name type="ordered locus">Ecok1_14970</name>
    <name type="ORF">APECO1_689</name>
</gene>
<protein>
    <recommendedName>
        <fullName>Dihydromonapterin reductase</fullName>
        <shortName>H(2)-MPt reductase</shortName>
        <ecNumber evidence="1">1.5.1.50</ecNumber>
    </recommendedName>
    <alternativeName>
        <fullName>Dihydrofolate reductase</fullName>
        <shortName>DHFR</shortName>
        <ecNumber evidence="1">1.5.1.3</ecNumber>
    </alternativeName>
</protein>
<feature type="chain" id="PRO_0000339394" description="Dihydromonapterin reductase">
    <location>
        <begin position="1"/>
        <end position="240"/>
    </location>
</feature>
<feature type="active site" description="Proton acceptor" evidence="2">
    <location>
        <position position="152"/>
    </location>
</feature>
<evidence type="ECO:0000250" key="1">
    <source>
        <dbReference type="UniProtKB" id="P0AFS3"/>
    </source>
</evidence>
<evidence type="ECO:0000255" key="2">
    <source>
        <dbReference type="PROSITE-ProRule" id="PRU10001"/>
    </source>
</evidence>
<evidence type="ECO:0000305" key="3"/>
<proteinExistence type="inferred from homology"/>
<sequence length="240" mass="26382">MGKTQSLPILITGGGRRIGLALAWHFINQKQPVIVSYRTHYPAIDGLIKAGAQCIQADFSTNDGVMAFADEVLKSTHGLRAILHNASAWMAEKPGAPLTDVLACMMQIHVNTPYLLNHALERLLRGHGHAASDIIHFTDYVVERGSDKHIAYAASKAALDNMTRSFARKLAPEVKVNSIAPSLILFNEHDDAEYRQQALNKSLMKTAPGEKEVIDLVDYLLTSCFVTGRSFPLDGGRHLR</sequence>
<keyword id="KW-0521">NADP</keyword>
<keyword id="KW-0554">One-carbon metabolism</keyword>
<keyword id="KW-0560">Oxidoreductase</keyword>
<keyword id="KW-1185">Reference proteome</keyword>
<dbReference type="EC" id="1.5.1.50" evidence="1"/>
<dbReference type="EC" id="1.5.1.3" evidence="1"/>
<dbReference type="EMBL" id="CP000468">
    <property type="protein sequence ID" value="ABJ00991.1"/>
    <property type="molecule type" value="Genomic_DNA"/>
</dbReference>
<dbReference type="RefSeq" id="WP_000520811.1">
    <property type="nucleotide sequence ID" value="NZ_CADILS010000002.1"/>
</dbReference>
<dbReference type="SMR" id="A1ABF1"/>
<dbReference type="KEGG" id="ecv:APECO1_689"/>
<dbReference type="HOGENOM" id="CLU_010194_1_3_6"/>
<dbReference type="Proteomes" id="UP000008216">
    <property type="component" value="Chromosome"/>
</dbReference>
<dbReference type="GO" id="GO:0004146">
    <property type="term" value="F:dihydrofolate reductase activity"/>
    <property type="evidence" value="ECO:0007669"/>
    <property type="project" value="UniProtKB-EC"/>
</dbReference>
<dbReference type="GO" id="GO:0006730">
    <property type="term" value="P:one-carbon metabolic process"/>
    <property type="evidence" value="ECO:0007669"/>
    <property type="project" value="UniProtKB-KW"/>
</dbReference>
<dbReference type="CDD" id="cd05357">
    <property type="entry name" value="PR_SDR_c"/>
    <property type="match status" value="1"/>
</dbReference>
<dbReference type="FunFam" id="3.40.50.720:FF:000225">
    <property type="entry name" value="Dihydrofolate reductase FolM"/>
    <property type="match status" value="1"/>
</dbReference>
<dbReference type="Gene3D" id="3.40.50.720">
    <property type="entry name" value="NAD(P)-binding Rossmann-like Domain"/>
    <property type="match status" value="1"/>
</dbReference>
<dbReference type="InterPro" id="IPR036291">
    <property type="entry name" value="NAD(P)-bd_dom_sf"/>
</dbReference>
<dbReference type="InterPro" id="IPR020904">
    <property type="entry name" value="Sc_DH/Rdtase_CS"/>
</dbReference>
<dbReference type="InterPro" id="IPR002347">
    <property type="entry name" value="SDR_fam"/>
</dbReference>
<dbReference type="NCBIfam" id="NF005066">
    <property type="entry name" value="PRK06483.1"/>
    <property type="match status" value="1"/>
</dbReference>
<dbReference type="PANTHER" id="PTHR43639:SF6">
    <property type="entry name" value="DIHYDROMONAPTERIN REDUCTASE"/>
    <property type="match status" value="1"/>
</dbReference>
<dbReference type="PANTHER" id="PTHR43639">
    <property type="entry name" value="OXIDOREDUCTASE, SHORT-CHAIN DEHYDROGENASE/REDUCTASE FAMILY (AFU_ORTHOLOGUE AFUA_5G02870)"/>
    <property type="match status" value="1"/>
</dbReference>
<dbReference type="Pfam" id="PF13561">
    <property type="entry name" value="adh_short_C2"/>
    <property type="match status" value="1"/>
</dbReference>
<dbReference type="PRINTS" id="PR00081">
    <property type="entry name" value="GDHRDH"/>
</dbReference>
<dbReference type="SUPFAM" id="SSF51735">
    <property type="entry name" value="NAD(P)-binding Rossmann-fold domains"/>
    <property type="match status" value="1"/>
</dbReference>
<dbReference type="PROSITE" id="PS00061">
    <property type="entry name" value="ADH_SHORT"/>
    <property type="match status" value="1"/>
</dbReference>
<comment type="function">
    <text evidence="1">Catalyzes the reduction of dihydromonapterin to tetrahydromonapterin. Also has lower activity with dihydrofolate.</text>
</comment>
<comment type="catalytic activity">
    <reaction evidence="1">
        <text>(6S)-5,6,7,8-tetrahydrofolate + NADP(+) = 7,8-dihydrofolate + NADPH + H(+)</text>
        <dbReference type="Rhea" id="RHEA:15009"/>
        <dbReference type="ChEBI" id="CHEBI:15378"/>
        <dbReference type="ChEBI" id="CHEBI:57451"/>
        <dbReference type="ChEBI" id="CHEBI:57453"/>
        <dbReference type="ChEBI" id="CHEBI:57783"/>
        <dbReference type="ChEBI" id="CHEBI:58349"/>
        <dbReference type="EC" id="1.5.1.3"/>
    </reaction>
</comment>
<comment type="catalytic activity">
    <reaction evidence="1">
        <text>7,8-dihydromonapterin + NADPH + H(+) = 5,6,7,8-tetrahydromonapterin + NADP(+)</text>
        <dbReference type="Rhea" id="RHEA:34847"/>
        <dbReference type="ChEBI" id="CHEBI:15378"/>
        <dbReference type="ChEBI" id="CHEBI:57783"/>
        <dbReference type="ChEBI" id="CHEBI:58349"/>
        <dbReference type="ChEBI" id="CHEBI:71175"/>
        <dbReference type="ChEBI" id="CHEBI:71177"/>
        <dbReference type="EC" id="1.5.1.50"/>
    </reaction>
</comment>
<comment type="similarity">
    <text evidence="3">Belongs to the short-chain dehydrogenases/reductases (SDR) family. FolM subfamily.</text>
</comment>
<organism>
    <name type="scientific">Escherichia coli O1:K1 / APEC</name>
    <dbReference type="NCBI Taxonomy" id="405955"/>
    <lineage>
        <taxon>Bacteria</taxon>
        <taxon>Pseudomonadati</taxon>
        <taxon>Pseudomonadota</taxon>
        <taxon>Gammaproteobacteria</taxon>
        <taxon>Enterobacterales</taxon>
        <taxon>Enterobacteriaceae</taxon>
        <taxon>Escherichia</taxon>
    </lineage>
</organism>
<reference key="1">
    <citation type="journal article" date="2007" name="J. Bacteriol.">
        <title>The genome sequence of avian pathogenic Escherichia coli strain O1:K1:H7 shares strong similarities with human extraintestinal pathogenic E. coli genomes.</title>
        <authorList>
            <person name="Johnson T.J."/>
            <person name="Kariyawasam S."/>
            <person name="Wannemuehler Y."/>
            <person name="Mangiamele P."/>
            <person name="Johnson S.J."/>
            <person name="Doetkott C."/>
            <person name="Skyberg J.A."/>
            <person name="Lynne A.M."/>
            <person name="Johnson J.R."/>
            <person name="Nolan L.K."/>
        </authorList>
    </citation>
    <scope>NUCLEOTIDE SEQUENCE [LARGE SCALE GENOMIC DNA]</scope>
</reference>
<name>FOLM_ECOK1</name>
<accession>A1ABF1</accession>